<keyword id="KW-0963">Cytoplasm</keyword>
<keyword id="KW-1210">Necrosis</keyword>
<keyword id="KW-0539">Nucleus</keyword>
<keyword id="KW-1185">Reference proteome</keyword>
<sequence>MDTKYKDDLFRKYVQFHEGKVDTTPGKQSGSDEYLRVAAATLLSLHKVDPLYRFRLIQFYEVVESSLRSLSSSSLSALHCAFSMLETMAINLFLFPWKKEFRSIKTYTGPFVYYVKSTLLEKDIRAILKFMGYEPELGTAYKLKELVESLQVKMVSFELFLAKVECEQMLGIHSQVKDKGYSELDVVTERKSSTEDARGCSDALRRRAESREHLTTSMARVALQKSASERAAKDYYKPRVTKPSRSVDAYDSYWESRKPPSKASLSLRKEPLAMDVGEDLKDEIIRPSPSLLTMSSSPHGSPDDLPSISPINGLGLLRSTYFPTQDDVDLYTDSEPRATYRRQDALRSDIWLVKNDAHSIYHKRSPPTKESALSKCQNCGLSCSSSLCQRCDSVCPSASKPSGFPSKASAHDSLVHGAPMREKYVGQTQGLDRLATVHSKPKPSTTATSRCGFCNRAGATNTCTQCSKVSCDPCLGAYHYDPCCRKSELHKFMPNNQLNYKSTQFSHPVYR</sequence>
<comment type="function">
    <text evidence="1 2">Bridging factor that mediates the recruitment of CYLD to the LUBAC complex, thereby regulating TNF-alpha-induced necroptosis. Acts as a direct binding intermediate that bridges RNF31/HOIP, the catalytic subunit of the LUBAC complex, and the deubiquitinase (CYLD), thereby recruiting CYLD to the TNF-R1 signaling complex (TNF-RSC). Required to activate the 'Met-1'- (linear) and 'Lys-63'-linked deubiquitinase activities of CYLD (By similarity). Controls the kinase activity of RIPK1 and TNF-alpha-induced necroptosis by promoting 'Met-1'-linked deubiquitination of RIPK1 by CYLD (By similarity).</text>
</comment>
<comment type="subunit">
    <text evidence="2">Interacts (via the PIM motif) with RNF31/HOIP (via the PUB domain); the interaction is direct. Interacts (via the PUB domain) with CYLD; the interaction is direct.</text>
</comment>
<comment type="subcellular location">
    <subcellularLocation>
        <location evidence="2">Cytoplasm</location>
    </subcellularLocation>
    <subcellularLocation>
        <location evidence="5">Nucleus</location>
    </subcellularLocation>
</comment>
<comment type="tissue specificity">
    <text evidence="4 5">Expressed in the testis and to a lesser extent in the brain, while skeletal muscle and kidney show weak expression.</text>
</comment>
<comment type="developmental stage">
    <text evidence="4">During testicular development (from 2 to 45 days of age), expressed from 14 days and then increases steadily with an advancement of age.</text>
</comment>
<comment type="induction">
    <text evidence="5">Up-regulated following FSH treatment.</text>
</comment>
<comment type="similarity">
    <text evidence="7">Belongs to the SPATA2 family.</text>
</comment>
<comment type="sequence caution" evidence="7">
    <conflict type="erroneous initiation">
        <sequence resource="EMBL-CDS" id="AAK61814"/>
    </conflict>
    <text>Extended N-terminus.</text>
</comment>
<feature type="chain" id="PRO_0000445575" description="Spermatogenesis-associated protein 2">
    <location>
        <begin position="1"/>
        <end position="511"/>
    </location>
</feature>
<feature type="domain" description="PUB" evidence="3">
    <location>
        <begin position="77"/>
        <end position="149"/>
    </location>
</feature>
<feature type="short sequence motif" description="PIM motif" evidence="2">
    <location>
        <begin position="320"/>
        <end position="337"/>
    </location>
</feature>
<feature type="sequence conflict" description="In Ref. 1; AAK61814." evidence="7" ref="1">
    <original>I</original>
    <variation>M</variation>
    <location>
        <position position="172"/>
    </location>
</feature>
<feature type="sequence conflict" description="In Ref. 1; AAK61814." evidence="7" ref="1">
    <original>K</original>
    <variation>E</variation>
    <location>
        <position position="400"/>
    </location>
</feature>
<feature type="sequence conflict" description="In Ref. 1; AAK61814." evidence="7" ref="1">
    <original>P</original>
    <variation>L</variation>
    <location>
        <position position="508"/>
    </location>
</feature>
<dbReference type="EMBL" id="AF123651">
    <property type="protein sequence ID" value="AAK61814.1"/>
    <property type="status" value="ALT_INIT"/>
    <property type="molecule type" value="mRNA"/>
</dbReference>
<dbReference type="EMBL" id="AC131854">
    <property type="status" value="NOT_ANNOTATED_CDS"/>
    <property type="molecule type" value="Genomic_DNA"/>
</dbReference>
<dbReference type="EMBL" id="BC081752">
    <property type="protein sequence ID" value="AAH81752.1"/>
    <property type="molecule type" value="mRNA"/>
</dbReference>
<dbReference type="EMBL" id="CH474005">
    <property type="protein sequence ID" value="EDL96405.1"/>
    <property type="molecule type" value="Genomic_DNA"/>
</dbReference>
<dbReference type="PIR" id="JC7682">
    <property type="entry name" value="JC7682"/>
</dbReference>
<dbReference type="RefSeq" id="NP_001416586.1">
    <property type="nucleotide sequence ID" value="NM_001429657.1"/>
</dbReference>
<dbReference type="RefSeq" id="NP_001416587.1">
    <property type="nucleotide sequence ID" value="NM_001429658.1"/>
</dbReference>
<dbReference type="RefSeq" id="NP_446127.3">
    <property type="nucleotide sequence ID" value="NM_053675.2"/>
</dbReference>
<dbReference type="RefSeq" id="XP_006235698.1">
    <property type="nucleotide sequence ID" value="XM_006235636.3"/>
</dbReference>
<dbReference type="RefSeq" id="XP_038960021.1">
    <property type="nucleotide sequence ID" value="XM_039104093.2"/>
</dbReference>
<dbReference type="SMR" id="Q66HP6"/>
<dbReference type="FunCoup" id="Q66HP6">
    <property type="interactions" value="1961"/>
</dbReference>
<dbReference type="STRING" id="10116.ENSRNOP00000012604"/>
<dbReference type="iPTMnet" id="Q66HP6"/>
<dbReference type="PhosphoSitePlus" id="Q66HP6"/>
<dbReference type="PaxDb" id="10116-ENSRNOP00000012604"/>
<dbReference type="Ensembl" id="ENSRNOT00000012604.5">
    <property type="protein sequence ID" value="ENSRNOP00000012604.4"/>
    <property type="gene ID" value="ENSRNOG00000009207.6"/>
</dbReference>
<dbReference type="GeneID" id="114210"/>
<dbReference type="KEGG" id="rno:114210"/>
<dbReference type="AGR" id="RGD:620754"/>
<dbReference type="CTD" id="9825"/>
<dbReference type="RGD" id="620754">
    <property type="gene designation" value="Spata2"/>
</dbReference>
<dbReference type="eggNOG" id="ENOG502RR2T">
    <property type="taxonomic scope" value="Eukaryota"/>
</dbReference>
<dbReference type="GeneTree" id="ENSGT00530000063956"/>
<dbReference type="HOGENOM" id="CLU_039585_0_0_1"/>
<dbReference type="InParanoid" id="Q66HP6"/>
<dbReference type="OMA" id="NKQRPIN"/>
<dbReference type="PhylomeDB" id="Q66HP6"/>
<dbReference type="TreeFam" id="TF328840"/>
<dbReference type="Reactome" id="R-RNO-5357786">
    <property type="pathway name" value="TNFR1-induced proapoptotic signaling"/>
</dbReference>
<dbReference type="Reactome" id="R-RNO-5357905">
    <property type="pathway name" value="Regulation of TNFR1 signaling"/>
</dbReference>
<dbReference type="Reactome" id="R-RNO-5357956">
    <property type="pathway name" value="TNFR1-induced NF-kappa-B signaling pathway"/>
</dbReference>
<dbReference type="PRO" id="PR:Q66HP6"/>
<dbReference type="Proteomes" id="UP000002494">
    <property type="component" value="Chromosome 3"/>
</dbReference>
<dbReference type="Proteomes" id="UP000234681">
    <property type="component" value="Chromosome 3"/>
</dbReference>
<dbReference type="Bgee" id="ENSRNOG00000009207">
    <property type="expression patterns" value="Expressed in jejunum and 19 other cell types or tissues"/>
</dbReference>
<dbReference type="GO" id="GO:0005737">
    <property type="term" value="C:cytoplasm"/>
    <property type="evidence" value="ECO:0000266"/>
    <property type="project" value="RGD"/>
</dbReference>
<dbReference type="GO" id="GO:0001650">
    <property type="term" value="C:fibrillar center"/>
    <property type="evidence" value="ECO:0007669"/>
    <property type="project" value="Ensembl"/>
</dbReference>
<dbReference type="GO" id="GO:0005654">
    <property type="term" value="C:nucleoplasm"/>
    <property type="evidence" value="ECO:0007669"/>
    <property type="project" value="Ensembl"/>
</dbReference>
<dbReference type="GO" id="GO:0044877">
    <property type="term" value="F:protein-containing complex binding"/>
    <property type="evidence" value="ECO:0000266"/>
    <property type="project" value="RGD"/>
</dbReference>
<dbReference type="GO" id="GO:0030159">
    <property type="term" value="F:signaling receptor complex adaptor activity"/>
    <property type="evidence" value="ECO:0000266"/>
    <property type="project" value="RGD"/>
</dbReference>
<dbReference type="GO" id="GO:1990381">
    <property type="term" value="F:ubiquitin-specific protease binding"/>
    <property type="evidence" value="ECO:0000266"/>
    <property type="project" value="RGD"/>
</dbReference>
<dbReference type="GO" id="GO:0070266">
    <property type="term" value="P:necroptotic process"/>
    <property type="evidence" value="ECO:0000266"/>
    <property type="project" value="RGD"/>
</dbReference>
<dbReference type="GO" id="GO:0070536">
    <property type="term" value="P:protein K63-linked deubiquitination"/>
    <property type="evidence" value="ECO:0000250"/>
    <property type="project" value="UniProtKB"/>
</dbReference>
<dbReference type="GO" id="GO:1990108">
    <property type="term" value="P:protein linear deubiquitination"/>
    <property type="evidence" value="ECO:0000250"/>
    <property type="project" value="UniProtKB"/>
</dbReference>
<dbReference type="GO" id="GO:0050727">
    <property type="term" value="P:regulation of inflammatory response"/>
    <property type="evidence" value="ECO:0000250"/>
    <property type="project" value="UniProtKB"/>
</dbReference>
<dbReference type="GO" id="GO:0060544">
    <property type="term" value="P:regulation of necroptotic process"/>
    <property type="evidence" value="ECO:0000250"/>
    <property type="project" value="UniProtKB"/>
</dbReference>
<dbReference type="GO" id="GO:0010803">
    <property type="term" value="P:regulation of tumor necrosis factor-mediated signaling pathway"/>
    <property type="evidence" value="ECO:0000250"/>
    <property type="project" value="UniProtKB"/>
</dbReference>
<dbReference type="GO" id="GO:0072520">
    <property type="term" value="P:seminiferous tubule development"/>
    <property type="evidence" value="ECO:0000266"/>
    <property type="project" value="RGD"/>
</dbReference>
<dbReference type="GO" id="GO:0007283">
    <property type="term" value="P:spermatogenesis"/>
    <property type="evidence" value="ECO:0000266"/>
    <property type="project" value="RGD"/>
</dbReference>
<dbReference type="CDD" id="cd19757">
    <property type="entry name" value="Bbox1"/>
    <property type="match status" value="1"/>
</dbReference>
<dbReference type="FunFam" id="1.20.58.2190:FF:000002">
    <property type="entry name" value="spermatogenesis-associated protein 2"/>
    <property type="match status" value="1"/>
</dbReference>
<dbReference type="Gene3D" id="1.20.58.2190">
    <property type="match status" value="1"/>
</dbReference>
<dbReference type="InterPro" id="IPR048839">
    <property type="entry name" value="SPATA2_PUB-like"/>
</dbReference>
<dbReference type="PANTHER" id="PTHR15326:SF8">
    <property type="entry name" value="SPERMATOGENESIS-ASSOCIATED PROTEIN 2"/>
    <property type="match status" value="1"/>
</dbReference>
<dbReference type="PANTHER" id="PTHR15326">
    <property type="entry name" value="SPERMATOGENESIS-ASSOCIATED PROTEIN 2/TAMOZHENNIC"/>
    <property type="match status" value="1"/>
</dbReference>
<dbReference type="Pfam" id="PF21388">
    <property type="entry name" value="SPATA2_PUB-like"/>
    <property type="match status" value="1"/>
</dbReference>
<reference key="1">
    <citation type="journal article" date="2001" name="Biochem. Biophys. Res. Commun.">
        <title>Evidence for FSH-dependent upregulation of SPATA2 (spermatogenesis-associated protein 2).</title>
        <authorList>
            <person name="Onisto M."/>
            <person name="Slongo L.M."/>
            <person name="Graziotto R."/>
            <person name="Zotti L."/>
            <person name="Negro A."/>
            <person name="Merico M."/>
            <person name="Moro E."/>
            <person name="Foresta C."/>
            <person name="Maurizio O."/>
            <person name="Liliana S.M."/>
            <person name="Romina G."/>
            <person name="Lorenza Z."/>
            <person name="Alessandro N."/>
            <person name="Maurizio M."/>
            <person name="Enrico M."/>
            <person name="Carlo F."/>
        </authorList>
    </citation>
    <scope>NUCLEOTIDE SEQUENCE [MRNA]</scope>
    <scope>SUBCELLULAR LOCATION</scope>
    <scope>TISSUE SPECIFICITY</scope>
    <scope>INDUCTION</scope>
    <source>
        <tissue>Testis</tissue>
    </source>
</reference>
<reference key="2">
    <citation type="journal article" date="2004" name="Nature">
        <title>Genome sequence of the Brown Norway rat yields insights into mammalian evolution.</title>
        <authorList>
            <person name="Gibbs R.A."/>
            <person name="Weinstock G.M."/>
            <person name="Metzker M.L."/>
            <person name="Muzny D.M."/>
            <person name="Sodergren E.J."/>
            <person name="Scherer S."/>
            <person name="Scott G."/>
            <person name="Steffen D."/>
            <person name="Worley K.C."/>
            <person name="Burch P.E."/>
            <person name="Okwuonu G."/>
            <person name="Hines S."/>
            <person name="Lewis L."/>
            <person name="Deramo C."/>
            <person name="Delgado O."/>
            <person name="Dugan-Rocha S."/>
            <person name="Miner G."/>
            <person name="Morgan M."/>
            <person name="Hawes A."/>
            <person name="Gill R."/>
            <person name="Holt R.A."/>
            <person name="Adams M.D."/>
            <person name="Amanatides P.G."/>
            <person name="Baden-Tillson H."/>
            <person name="Barnstead M."/>
            <person name="Chin S."/>
            <person name="Evans C.A."/>
            <person name="Ferriera S."/>
            <person name="Fosler C."/>
            <person name="Glodek A."/>
            <person name="Gu Z."/>
            <person name="Jennings D."/>
            <person name="Kraft C.L."/>
            <person name="Nguyen T."/>
            <person name="Pfannkoch C.M."/>
            <person name="Sitter C."/>
            <person name="Sutton G.G."/>
            <person name="Venter J.C."/>
            <person name="Woodage T."/>
            <person name="Smith D."/>
            <person name="Lee H.-M."/>
            <person name="Gustafson E."/>
            <person name="Cahill P."/>
            <person name="Kana A."/>
            <person name="Doucette-Stamm L."/>
            <person name="Weinstock K."/>
            <person name="Fechtel K."/>
            <person name="Weiss R.B."/>
            <person name="Dunn D.M."/>
            <person name="Green E.D."/>
            <person name="Blakesley R.W."/>
            <person name="Bouffard G.G."/>
            <person name="De Jong P.J."/>
            <person name="Osoegawa K."/>
            <person name="Zhu B."/>
            <person name="Marra M."/>
            <person name="Schein J."/>
            <person name="Bosdet I."/>
            <person name="Fjell C."/>
            <person name="Jones S."/>
            <person name="Krzywinski M."/>
            <person name="Mathewson C."/>
            <person name="Siddiqui A."/>
            <person name="Wye N."/>
            <person name="McPherson J."/>
            <person name="Zhao S."/>
            <person name="Fraser C.M."/>
            <person name="Shetty J."/>
            <person name="Shatsman S."/>
            <person name="Geer K."/>
            <person name="Chen Y."/>
            <person name="Abramzon S."/>
            <person name="Nierman W.C."/>
            <person name="Havlak P.H."/>
            <person name="Chen R."/>
            <person name="Durbin K.J."/>
            <person name="Egan A."/>
            <person name="Ren Y."/>
            <person name="Song X.-Z."/>
            <person name="Li B."/>
            <person name="Liu Y."/>
            <person name="Qin X."/>
            <person name="Cawley S."/>
            <person name="Cooney A.J."/>
            <person name="D'Souza L.M."/>
            <person name="Martin K."/>
            <person name="Wu J.Q."/>
            <person name="Gonzalez-Garay M.L."/>
            <person name="Jackson A.R."/>
            <person name="Kalafus K.J."/>
            <person name="McLeod M.P."/>
            <person name="Milosavljevic A."/>
            <person name="Virk D."/>
            <person name="Volkov A."/>
            <person name="Wheeler D.A."/>
            <person name="Zhang Z."/>
            <person name="Bailey J.A."/>
            <person name="Eichler E.E."/>
            <person name="Tuzun E."/>
            <person name="Birney E."/>
            <person name="Mongin E."/>
            <person name="Ureta-Vidal A."/>
            <person name="Woodwark C."/>
            <person name="Zdobnov E."/>
            <person name="Bork P."/>
            <person name="Suyama M."/>
            <person name="Torrents D."/>
            <person name="Alexandersson M."/>
            <person name="Trask B.J."/>
            <person name="Young J.M."/>
            <person name="Huang H."/>
            <person name="Wang H."/>
            <person name="Xing H."/>
            <person name="Daniels S."/>
            <person name="Gietzen D."/>
            <person name="Schmidt J."/>
            <person name="Stevens K."/>
            <person name="Vitt U."/>
            <person name="Wingrove J."/>
            <person name="Camara F."/>
            <person name="Mar Alba M."/>
            <person name="Abril J.F."/>
            <person name="Guigo R."/>
            <person name="Smit A."/>
            <person name="Dubchak I."/>
            <person name="Rubin E.M."/>
            <person name="Couronne O."/>
            <person name="Poliakov A."/>
            <person name="Huebner N."/>
            <person name="Ganten D."/>
            <person name="Goesele C."/>
            <person name="Hummel O."/>
            <person name="Kreitler T."/>
            <person name="Lee Y.-A."/>
            <person name="Monti J."/>
            <person name="Schulz H."/>
            <person name="Zimdahl H."/>
            <person name="Himmelbauer H."/>
            <person name="Lehrach H."/>
            <person name="Jacob H.J."/>
            <person name="Bromberg S."/>
            <person name="Gullings-Handley J."/>
            <person name="Jensen-Seaman M.I."/>
            <person name="Kwitek A.E."/>
            <person name="Lazar J."/>
            <person name="Pasko D."/>
            <person name="Tonellato P.J."/>
            <person name="Twigger S."/>
            <person name="Ponting C.P."/>
            <person name="Duarte J.M."/>
            <person name="Rice S."/>
            <person name="Goodstadt L."/>
            <person name="Beatson S.A."/>
            <person name="Emes R.D."/>
            <person name="Winter E.E."/>
            <person name="Webber C."/>
            <person name="Brandt P."/>
            <person name="Nyakatura G."/>
            <person name="Adetobi M."/>
            <person name="Chiaromonte F."/>
            <person name="Elnitski L."/>
            <person name="Eswara P."/>
            <person name="Hardison R.C."/>
            <person name="Hou M."/>
            <person name="Kolbe D."/>
            <person name="Makova K."/>
            <person name="Miller W."/>
            <person name="Nekrutenko A."/>
            <person name="Riemer C."/>
            <person name="Schwartz S."/>
            <person name="Taylor J."/>
            <person name="Yang S."/>
            <person name="Zhang Y."/>
            <person name="Lindpaintner K."/>
            <person name="Andrews T.D."/>
            <person name="Caccamo M."/>
            <person name="Clamp M."/>
            <person name="Clarke L."/>
            <person name="Curwen V."/>
            <person name="Durbin R.M."/>
            <person name="Eyras E."/>
            <person name="Searle S.M."/>
            <person name="Cooper G.M."/>
            <person name="Batzoglou S."/>
            <person name="Brudno M."/>
            <person name="Sidow A."/>
            <person name="Stone E.A."/>
            <person name="Payseur B.A."/>
            <person name="Bourque G."/>
            <person name="Lopez-Otin C."/>
            <person name="Puente X.S."/>
            <person name="Chakrabarti K."/>
            <person name="Chatterji S."/>
            <person name="Dewey C."/>
            <person name="Pachter L."/>
            <person name="Bray N."/>
            <person name="Yap V.B."/>
            <person name="Caspi A."/>
            <person name="Tesler G."/>
            <person name="Pevzner P.A."/>
            <person name="Haussler D."/>
            <person name="Roskin K.M."/>
            <person name="Baertsch R."/>
            <person name="Clawson H."/>
            <person name="Furey T.S."/>
            <person name="Hinrichs A.S."/>
            <person name="Karolchik D."/>
            <person name="Kent W.J."/>
            <person name="Rosenbloom K.R."/>
            <person name="Trumbower H."/>
            <person name="Weirauch M."/>
            <person name="Cooper D.N."/>
            <person name="Stenson P.D."/>
            <person name="Ma B."/>
            <person name="Brent M."/>
            <person name="Arumugam M."/>
            <person name="Shteynberg D."/>
            <person name="Copley R.R."/>
            <person name="Taylor M.S."/>
            <person name="Riethman H."/>
            <person name="Mudunuri U."/>
            <person name="Peterson J."/>
            <person name="Guyer M."/>
            <person name="Felsenfeld A."/>
            <person name="Old S."/>
            <person name="Mockrin S."/>
            <person name="Collins F.S."/>
        </authorList>
    </citation>
    <scope>NUCLEOTIDE SEQUENCE [LARGE SCALE GENOMIC DNA]</scope>
    <source>
        <strain>Brown Norway</strain>
    </source>
</reference>
<reference key="3">
    <citation type="journal article" date="2004" name="Genome Res.">
        <title>The status, quality, and expansion of the NIH full-length cDNA project: the Mammalian Gene Collection (MGC).</title>
        <authorList>
            <consortium name="The MGC Project Team"/>
        </authorList>
    </citation>
    <scope>NUCLEOTIDE SEQUENCE [LARGE SCALE MRNA]</scope>
    <source>
        <tissue>Testis</tissue>
    </source>
</reference>
<reference key="4">
    <citation type="journal article" date="2000" name="J. Endocrinol. Invest.">
        <title>A novel gene (PD1) with a potential role on rat spermatogenesis.</title>
        <authorList>
            <person name="Onisto M."/>
            <person name="Graziotto R."/>
            <person name="Scannapieco P."/>
            <person name="Marin P."/>
            <person name="Merico M."/>
            <person name="Slongo M.L."/>
            <person name="Foresta C."/>
        </authorList>
    </citation>
    <scope>TISSUE SPECIFICITY</scope>
    <scope>DEVELOPMENTAL STAGE</scope>
</reference>
<protein>
    <recommendedName>
        <fullName evidence="7">Spermatogenesis-associated protein 2</fullName>
    </recommendedName>
</protein>
<name>SPAT2_RAT</name>
<accession>Q66HP6</accession>
<accession>F1LNA7</accession>
<accession>Q91XS7</accession>
<evidence type="ECO:0000250" key="1">
    <source>
        <dbReference type="UniProtKB" id="Q8K004"/>
    </source>
</evidence>
<evidence type="ECO:0000250" key="2">
    <source>
        <dbReference type="UniProtKB" id="Q9UM82"/>
    </source>
</evidence>
<evidence type="ECO:0000255" key="3"/>
<evidence type="ECO:0000269" key="4">
    <source>
    </source>
</evidence>
<evidence type="ECO:0000269" key="5">
    <source>
    </source>
</evidence>
<evidence type="ECO:0000303" key="6">
    <source>
    </source>
</evidence>
<evidence type="ECO:0000305" key="7"/>
<evidence type="ECO:0000312" key="8">
    <source>
        <dbReference type="RGD" id="620754"/>
    </source>
</evidence>
<organism>
    <name type="scientific">Rattus norvegicus</name>
    <name type="common">Rat</name>
    <dbReference type="NCBI Taxonomy" id="10116"/>
    <lineage>
        <taxon>Eukaryota</taxon>
        <taxon>Metazoa</taxon>
        <taxon>Chordata</taxon>
        <taxon>Craniata</taxon>
        <taxon>Vertebrata</taxon>
        <taxon>Euteleostomi</taxon>
        <taxon>Mammalia</taxon>
        <taxon>Eutheria</taxon>
        <taxon>Euarchontoglires</taxon>
        <taxon>Glires</taxon>
        <taxon>Rodentia</taxon>
        <taxon>Myomorpha</taxon>
        <taxon>Muroidea</taxon>
        <taxon>Muridae</taxon>
        <taxon>Murinae</taxon>
        <taxon>Rattus</taxon>
    </lineage>
</organism>
<proteinExistence type="evidence at transcript level"/>
<gene>
    <name evidence="8" type="primary">Spata2</name>
    <name evidence="6" type="synonym">Pd1</name>
</gene>